<reference key="1">
    <citation type="journal article" date="2008" name="BMC Genomics">
        <title>The genome of Aeromonas salmonicida subsp. salmonicida A449: insights into the evolution of a fish pathogen.</title>
        <authorList>
            <person name="Reith M.E."/>
            <person name="Singh R.K."/>
            <person name="Curtis B."/>
            <person name="Boyd J.M."/>
            <person name="Bouevitch A."/>
            <person name="Kimball J."/>
            <person name="Munholland J."/>
            <person name="Murphy C."/>
            <person name="Sarty D."/>
            <person name="Williams J."/>
            <person name="Nash J.H."/>
            <person name="Johnson S.C."/>
            <person name="Brown L.L."/>
        </authorList>
    </citation>
    <scope>NUCLEOTIDE SEQUENCE [LARGE SCALE GENOMIC DNA]</scope>
    <source>
        <strain>A449</strain>
    </source>
</reference>
<keyword id="KW-0488">Methylation</keyword>
<keyword id="KW-0687">Ribonucleoprotein</keyword>
<keyword id="KW-0689">Ribosomal protein</keyword>
<keyword id="KW-0694">RNA-binding</keyword>
<keyword id="KW-0699">rRNA-binding</keyword>
<comment type="function">
    <text evidence="1">Forms part of the ribosomal stalk which helps the ribosome interact with GTP-bound translation factors.</text>
</comment>
<comment type="subunit">
    <text evidence="1">Part of the ribosomal stalk of the 50S ribosomal subunit. Interacts with L10 and the large rRNA to form the base of the stalk. L10 forms an elongated spine to which L12 dimers bind in a sequential fashion forming a multimeric L10(L12)X complex.</text>
</comment>
<comment type="PTM">
    <text evidence="1">One or more lysine residues are methylated.</text>
</comment>
<comment type="similarity">
    <text evidence="1">Belongs to the universal ribosomal protein uL11 family.</text>
</comment>
<name>RL11_AERS4</name>
<dbReference type="EMBL" id="CP000644">
    <property type="protein sequence ID" value="ABO88467.1"/>
    <property type="molecule type" value="Genomic_DNA"/>
</dbReference>
<dbReference type="RefSeq" id="WP_005318556.1">
    <property type="nucleotide sequence ID" value="NC_009348.1"/>
</dbReference>
<dbReference type="SMR" id="A4SHU5"/>
<dbReference type="STRING" id="29491.GCA_000820065_03156"/>
<dbReference type="GeneID" id="92725360"/>
<dbReference type="KEGG" id="asa:ASA_0279"/>
<dbReference type="eggNOG" id="COG0080">
    <property type="taxonomic scope" value="Bacteria"/>
</dbReference>
<dbReference type="HOGENOM" id="CLU_074237_2_0_6"/>
<dbReference type="Proteomes" id="UP000000225">
    <property type="component" value="Chromosome"/>
</dbReference>
<dbReference type="GO" id="GO:0022625">
    <property type="term" value="C:cytosolic large ribosomal subunit"/>
    <property type="evidence" value="ECO:0007669"/>
    <property type="project" value="TreeGrafter"/>
</dbReference>
<dbReference type="GO" id="GO:0070180">
    <property type="term" value="F:large ribosomal subunit rRNA binding"/>
    <property type="evidence" value="ECO:0007669"/>
    <property type="project" value="UniProtKB-UniRule"/>
</dbReference>
<dbReference type="GO" id="GO:0003735">
    <property type="term" value="F:structural constituent of ribosome"/>
    <property type="evidence" value="ECO:0007669"/>
    <property type="project" value="InterPro"/>
</dbReference>
<dbReference type="GO" id="GO:0006412">
    <property type="term" value="P:translation"/>
    <property type="evidence" value="ECO:0007669"/>
    <property type="project" value="UniProtKB-UniRule"/>
</dbReference>
<dbReference type="CDD" id="cd00349">
    <property type="entry name" value="Ribosomal_L11"/>
    <property type="match status" value="1"/>
</dbReference>
<dbReference type="FunFam" id="1.10.10.250:FF:000001">
    <property type="entry name" value="50S ribosomal protein L11"/>
    <property type="match status" value="1"/>
</dbReference>
<dbReference type="FunFam" id="3.30.1550.10:FF:000001">
    <property type="entry name" value="50S ribosomal protein L11"/>
    <property type="match status" value="1"/>
</dbReference>
<dbReference type="Gene3D" id="1.10.10.250">
    <property type="entry name" value="Ribosomal protein L11, C-terminal domain"/>
    <property type="match status" value="1"/>
</dbReference>
<dbReference type="Gene3D" id="3.30.1550.10">
    <property type="entry name" value="Ribosomal protein L11/L12, N-terminal domain"/>
    <property type="match status" value="1"/>
</dbReference>
<dbReference type="HAMAP" id="MF_00736">
    <property type="entry name" value="Ribosomal_uL11"/>
    <property type="match status" value="1"/>
</dbReference>
<dbReference type="InterPro" id="IPR000911">
    <property type="entry name" value="Ribosomal_uL11"/>
</dbReference>
<dbReference type="InterPro" id="IPR006519">
    <property type="entry name" value="Ribosomal_uL11_bac-typ"/>
</dbReference>
<dbReference type="InterPro" id="IPR020783">
    <property type="entry name" value="Ribosomal_uL11_C"/>
</dbReference>
<dbReference type="InterPro" id="IPR036769">
    <property type="entry name" value="Ribosomal_uL11_C_sf"/>
</dbReference>
<dbReference type="InterPro" id="IPR020785">
    <property type="entry name" value="Ribosomal_uL11_CS"/>
</dbReference>
<dbReference type="InterPro" id="IPR020784">
    <property type="entry name" value="Ribosomal_uL11_N"/>
</dbReference>
<dbReference type="InterPro" id="IPR036796">
    <property type="entry name" value="Ribosomal_uL11_N_sf"/>
</dbReference>
<dbReference type="NCBIfam" id="TIGR01632">
    <property type="entry name" value="L11_bact"/>
    <property type="match status" value="1"/>
</dbReference>
<dbReference type="PANTHER" id="PTHR11661">
    <property type="entry name" value="60S RIBOSOMAL PROTEIN L12"/>
    <property type="match status" value="1"/>
</dbReference>
<dbReference type="PANTHER" id="PTHR11661:SF1">
    <property type="entry name" value="LARGE RIBOSOMAL SUBUNIT PROTEIN UL11M"/>
    <property type="match status" value="1"/>
</dbReference>
<dbReference type="Pfam" id="PF00298">
    <property type="entry name" value="Ribosomal_L11"/>
    <property type="match status" value="1"/>
</dbReference>
<dbReference type="Pfam" id="PF03946">
    <property type="entry name" value="Ribosomal_L11_N"/>
    <property type="match status" value="1"/>
</dbReference>
<dbReference type="SMART" id="SM00649">
    <property type="entry name" value="RL11"/>
    <property type="match status" value="1"/>
</dbReference>
<dbReference type="SUPFAM" id="SSF54747">
    <property type="entry name" value="Ribosomal L11/L12e N-terminal domain"/>
    <property type="match status" value="1"/>
</dbReference>
<dbReference type="SUPFAM" id="SSF46906">
    <property type="entry name" value="Ribosomal protein L11, C-terminal domain"/>
    <property type="match status" value="1"/>
</dbReference>
<dbReference type="PROSITE" id="PS00359">
    <property type="entry name" value="RIBOSOMAL_L11"/>
    <property type="match status" value="1"/>
</dbReference>
<proteinExistence type="inferred from homology"/>
<sequence>MAKKVTAYIKLQVKAGSANPSPPVGPALGQHGVNIMEFCKAFNARTEKLEKGSPTPVVITVYSDRSFTFETKTPPAAFLLKKAAGIQSGSAKPNKDKVGKVTVAQLQEIAKTKEPDMTGADLDAKVRCIAGSARSMGLVVED</sequence>
<evidence type="ECO:0000255" key="1">
    <source>
        <dbReference type="HAMAP-Rule" id="MF_00736"/>
    </source>
</evidence>
<evidence type="ECO:0000305" key="2"/>
<protein>
    <recommendedName>
        <fullName evidence="1">Large ribosomal subunit protein uL11</fullName>
    </recommendedName>
    <alternativeName>
        <fullName evidence="2">50S ribosomal protein L11</fullName>
    </alternativeName>
</protein>
<gene>
    <name evidence="1" type="primary">rplK</name>
    <name type="ordered locus">ASA_0279</name>
</gene>
<organism>
    <name type="scientific">Aeromonas salmonicida (strain A449)</name>
    <dbReference type="NCBI Taxonomy" id="382245"/>
    <lineage>
        <taxon>Bacteria</taxon>
        <taxon>Pseudomonadati</taxon>
        <taxon>Pseudomonadota</taxon>
        <taxon>Gammaproteobacteria</taxon>
        <taxon>Aeromonadales</taxon>
        <taxon>Aeromonadaceae</taxon>
        <taxon>Aeromonas</taxon>
    </lineage>
</organism>
<accession>A4SHU5</accession>
<feature type="chain" id="PRO_1000046133" description="Large ribosomal subunit protein uL11">
    <location>
        <begin position="1"/>
        <end position="142"/>
    </location>
</feature>